<comment type="function">
    <text evidence="1">Catalyzes carboxymethyl transfer from carboxy-S-adenosyl-L-methionine (Cx-SAM) to 5-hydroxyuridine (ho5U) to form 5-carboxymethoxyuridine (cmo5U) at position 34 in tRNAs.</text>
</comment>
<comment type="catalytic activity">
    <reaction evidence="1">
        <text>carboxy-S-adenosyl-L-methionine + 5-hydroxyuridine(34) in tRNA = 5-carboxymethoxyuridine(34) in tRNA + S-adenosyl-L-homocysteine + H(+)</text>
        <dbReference type="Rhea" id="RHEA:52848"/>
        <dbReference type="Rhea" id="RHEA-COMP:13381"/>
        <dbReference type="Rhea" id="RHEA-COMP:13383"/>
        <dbReference type="ChEBI" id="CHEBI:15378"/>
        <dbReference type="ChEBI" id="CHEBI:57856"/>
        <dbReference type="ChEBI" id="CHEBI:134278"/>
        <dbReference type="ChEBI" id="CHEBI:136877"/>
        <dbReference type="ChEBI" id="CHEBI:136879"/>
    </reaction>
</comment>
<comment type="subunit">
    <text evidence="1">Homotetramer.</text>
</comment>
<comment type="similarity">
    <text evidence="1">Belongs to the class I-like SAM-binding methyltransferase superfamily. CmoB family.</text>
</comment>
<proteinExistence type="inferred from homology"/>
<evidence type="ECO:0000255" key="1">
    <source>
        <dbReference type="HAMAP-Rule" id="MF_01590"/>
    </source>
</evidence>
<protein>
    <recommendedName>
        <fullName evidence="1">tRNA U34 carboxymethyltransferase</fullName>
        <ecNumber evidence="1">2.5.1.-</ecNumber>
    </recommendedName>
</protein>
<name>CMOB_NAUPA</name>
<organism>
    <name type="scientific">Nautilia profundicola (strain ATCC BAA-1463 / DSM 18972 / AmH)</name>
    <dbReference type="NCBI Taxonomy" id="598659"/>
    <lineage>
        <taxon>Bacteria</taxon>
        <taxon>Pseudomonadati</taxon>
        <taxon>Campylobacterota</taxon>
        <taxon>Epsilonproteobacteria</taxon>
        <taxon>Nautiliales</taxon>
        <taxon>Nautiliaceae</taxon>
        <taxon>Nautilia</taxon>
    </lineage>
</organism>
<reference key="1">
    <citation type="journal article" date="2009" name="PLoS Genet.">
        <title>Adaptations to submarine hydrothermal environments exemplified by the genome of Nautilia profundicola.</title>
        <authorList>
            <person name="Campbell B.J."/>
            <person name="Smith J.L."/>
            <person name="Hanson T.E."/>
            <person name="Klotz M.G."/>
            <person name="Stein L.Y."/>
            <person name="Lee C.K."/>
            <person name="Wu D."/>
            <person name="Robinson J.M."/>
            <person name="Khouri H.M."/>
            <person name="Eisen J.A."/>
            <person name="Cary S.C."/>
        </authorList>
    </citation>
    <scope>NUCLEOTIDE SEQUENCE [LARGE SCALE GENOMIC DNA]</scope>
    <source>
        <strain>ATCC BAA-1463 / DSM 18972 / AmH</strain>
    </source>
</reference>
<dbReference type="EC" id="2.5.1.-" evidence="1"/>
<dbReference type="EMBL" id="CP001279">
    <property type="protein sequence ID" value="ACM93533.1"/>
    <property type="molecule type" value="Genomic_DNA"/>
</dbReference>
<dbReference type="RefSeq" id="WP_015902585.1">
    <property type="nucleotide sequence ID" value="NC_012115.1"/>
</dbReference>
<dbReference type="SMR" id="B9L8G5"/>
<dbReference type="STRING" id="598659.NAMH_0505"/>
<dbReference type="KEGG" id="nam:NAMH_0505"/>
<dbReference type="eggNOG" id="COG0500">
    <property type="taxonomic scope" value="Bacteria"/>
</dbReference>
<dbReference type="HOGENOM" id="CLU_052665_1_0_7"/>
<dbReference type="OrthoDB" id="9765084at2"/>
<dbReference type="Proteomes" id="UP000000448">
    <property type="component" value="Chromosome"/>
</dbReference>
<dbReference type="GO" id="GO:0016765">
    <property type="term" value="F:transferase activity, transferring alkyl or aryl (other than methyl) groups"/>
    <property type="evidence" value="ECO:0007669"/>
    <property type="project" value="InterPro"/>
</dbReference>
<dbReference type="GO" id="GO:0002098">
    <property type="term" value="P:tRNA wobble uridine modification"/>
    <property type="evidence" value="ECO:0007669"/>
    <property type="project" value="InterPro"/>
</dbReference>
<dbReference type="CDD" id="cd02440">
    <property type="entry name" value="AdoMet_MTases"/>
    <property type="match status" value="1"/>
</dbReference>
<dbReference type="Gene3D" id="3.40.50.150">
    <property type="entry name" value="Vaccinia Virus protein VP39"/>
    <property type="match status" value="1"/>
</dbReference>
<dbReference type="HAMAP" id="MF_01590">
    <property type="entry name" value="tRNA_carboxymethyltr_CmoB"/>
    <property type="match status" value="1"/>
</dbReference>
<dbReference type="InterPro" id="IPR010017">
    <property type="entry name" value="CmoB"/>
</dbReference>
<dbReference type="InterPro" id="IPR027555">
    <property type="entry name" value="Mo5U34_MeTrfas-like"/>
</dbReference>
<dbReference type="InterPro" id="IPR029063">
    <property type="entry name" value="SAM-dependent_MTases_sf"/>
</dbReference>
<dbReference type="NCBIfam" id="NF011650">
    <property type="entry name" value="PRK15068.1"/>
    <property type="match status" value="1"/>
</dbReference>
<dbReference type="NCBIfam" id="TIGR00452">
    <property type="entry name" value="tRNA 5-methoxyuridine(34)/uridine 5-oxyacetic acid(34) synthase CmoB"/>
    <property type="match status" value="1"/>
</dbReference>
<dbReference type="PANTHER" id="PTHR43861">
    <property type="entry name" value="TRANS-ACONITATE 2-METHYLTRANSFERASE-RELATED"/>
    <property type="match status" value="1"/>
</dbReference>
<dbReference type="Pfam" id="PF08003">
    <property type="entry name" value="Methyltransf_9"/>
    <property type="match status" value="1"/>
</dbReference>
<dbReference type="SUPFAM" id="SSF53335">
    <property type="entry name" value="S-adenosyl-L-methionine-dependent methyltransferases"/>
    <property type="match status" value="1"/>
</dbReference>
<keyword id="KW-0808">Transferase</keyword>
<keyword id="KW-0819">tRNA processing</keyword>
<accession>B9L8G5</accession>
<sequence length="300" mass="35781">MDINKVLKERQKWFEWKNIKPIYEKIVQWQIENKQLNVKNVKLNDIIEITLDENKEKLKEIEQIAKMLKPWRKGPFKINDLFIDTEWRSFIKWNIIKPHINLENKDVLDVGCNNGYYMFRMLEMNPKSITGFDPSALFNLQFEFINNFIKSDIEYKLLGVEHIPFYDKKFDTIFCLGVLYHRPDPITMLKELKAGLNPGGEVILDTLIIEGDEEIALCPVRYQKMKNVYFIPTLKALYNWIEKAKFKDVKFIGKRYTDLEEQRKTDWIEGESLNNFLNEDLTKTVEGYPPPLRVYLKLKN</sequence>
<gene>
    <name evidence="1" type="primary">cmoB</name>
    <name type="ordered locus">NAMH_0505</name>
</gene>
<feature type="chain" id="PRO_0000381861" description="tRNA U34 carboxymethyltransferase">
    <location>
        <begin position="1"/>
        <end position="300"/>
    </location>
</feature>
<feature type="binding site" evidence="1">
    <location>
        <position position="73"/>
    </location>
    <ligand>
        <name>carboxy-S-adenosyl-L-methionine</name>
        <dbReference type="ChEBI" id="CHEBI:134278"/>
    </ligand>
</feature>
<feature type="binding site" evidence="1">
    <location>
        <position position="87"/>
    </location>
    <ligand>
        <name>carboxy-S-adenosyl-L-methionine</name>
        <dbReference type="ChEBI" id="CHEBI:134278"/>
    </ligand>
</feature>
<feature type="binding site" evidence="1">
    <location>
        <position position="92"/>
    </location>
    <ligand>
        <name>carboxy-S-adenosyl-L-methionine</name>
        <dbReference type="ChEBI" id="CHEBI:134278"/>
    </ligand>
</feature>
<feature type="binding site" evidence="1">
    <location>
        <position position="111"/>
    </location>
    <ligand>
        <name>carboxy-S-adenosyl-L-methionine</name>
        <dbReference type="ChEBI" id="CHEBI:134278"/>
    </ligand>
</feature>
<feature type="binding site" evidence="1">
    <location>
        <begin position="133"/>
        <end position="135"/>
    </location>
    <ligand>
        <name>carboxy-S-adenosyl-L-methionine</name>
        <dbReference type="ChEBI" id="CHEBI:134278"/>
    </ligand>
</feature>
<feature type="binding site" evidence="1">
    <location>
        <begin position="160"/>
        <end position="161"/>
    </location>
    <ligand>
        <name>carboxy-S-adenosyl-L-methionine</name>
        <dbReference type="ChEBI" id="CHEBI:134278"/>
    </ligand>
</feature>
<feature type="binding site" evidence="1">
    <location>
        <position position="180"/>
    </location>
    <ligand>
        <name>carboxy-S-adenosyl-L-methionine</name>
        <dbReference type="ChEBI" id="CHEBI:134278"/>
    </ligand>
</feature>
<feature type="binding site" evidence="1">
    <location>
        <position position="293"/>
    </location>
    <ligand>
        <name>carboxy-S-adenosyl-L-methionine</name>
        <dbReference type="ChEBI" id="CHEBI:134278"/>
    </ligand>
</feature>